<comment type="function">
    <text evidence="3 6">Required for the assembly of the copper chromophores of nitrous oxide reductase (PubMed:2170125). Could be part of the ABC transporter complex NosDFY (Probable).</text>
</comment>
<comment type="subunit">
    <text evidence="6">The complex may be composed of an ATP-binding protein (NosF), a transmembrane protein (NosY) and a solute-binding protein (NosD).</text>
</comment>
<comment type="subcellular location">
    <subcellularLocation>
        <location evidence="7">Cell inner membrane</location>
        <topology evidence="1">Multi-pass membrane protein</topology>
    </subcellularLocation>
</comment>
<comment type="induction">
    <text evidence="2">Induced in response to denitrifying conditions. Activation requires NosR and DnrD regulators.</text>
</comment>
<protein>
    <recommendedName>
        <fullName evidence="5">Probable ABC transporter permease protein NosY</fullName>
    </recommendedName>
</protein>
<organism>
    <name type="scientific">Stutzerimonas stutzeri</name>
    <name type="common">Pseudomonas stutzeri</name>
    <dbReference type="NCBI Taxonomy" id="316"/>
    <lineage>
        <taxon>Bacteria</taxon>
        <taxon>Pseudomonadati</taxon>
        <taxon>Pseudomonadota</taxon>
        <taxon>Gammaproteobacteria</taxon>
        <taxon>Pseudomonadales</taxon>
        <taxon>Pseudomonadaceae</taxon>
        <taxon>Stutzerimonas</taxon>
    </lineage>
</organism>
<feature type="chain" id="PRO_0000021822" description="Probable ABC transporter permease protein NosY">
    <location>
        <begin position="1"/>
        <end position="276"/>
    </location>
</feature>
<feature type="transmembrane region" description="Helical" evidence="1">
    <location>
        <begin position="20"/>
        <end position="40"/>
    </location>
</feature>
<feature type="transmembrane region" description="Helical" evidence="1">
    <location>
        <begin position="55"/>
        <end position="75"/>
    </location>
</feature>
<feature type="transmembrane region" description="Helical" evidence="1">
    <location>
        <begin position="111"/>
        <end position="131"/>
    </location>
</feature>
<feature type="transmembrane region" description="Helical" evidence="1">
    <location>
        <begin position="146"/>
        <end position="166"/>
    </location>
</feature>
<feature type="transmembrane region" description="Helical" evidence="1">
    <location>
        <begin position="179"/>
        <end position="199"/>
    </location>
</feature>
<feature type="transmembrane region" description="Helical" evidence="1">
    <location>
        <begin position="251"/>
        <end position="271"/>
    </location>
</feature>
<feature type="helix" evidence="8">
    <location>
        <begin position="3"/>
        <end position="15"/>
    </location>
</feature>
<feature type="helix" evidence="8">
    <location>
        <begin position="19"/>
        <end position="42"/>
    </location>
</feature>
<feature type="helix" evidence="8">
    <location>
        <begin position="51"/>
        <end position="73"/>
    </location>
</feature>
<feature type="helix" evidence="8">
    <location>
        <begin position="79"/>
        <end position="83"/>
    </location>
</feature>
<feature type="helix" evidence="8">
    <location>
        <begin position="86"/>
        <end position="92"/>
    </location>
</feature>
<feature type="helix" evidence="8">
    <location>
        <begin position="98"/>
        <end position="130"/>
    </location>
</feature>
<feature type="helix" evidence="8">
    <location>
        <begin position="136"/>
        <end position="167"/>
    </location>
</feature>
<feature type="helix" evidence="8">
    <location>
        <begin position="171"/>
        <end position="186"/>
    </location>
</feature>
<feature type="helix" evidence="8">
    <location>
        <begin position="188"/>
        <end position="200"/>
    </location>
</feature>
<feature type="turn" evidence="8">
    <location>
        <begin position="206"/>
        <end position="208"/>
    </location>
</feature>
<feature type="helix" evidence="8">
    <location>
        <begin position="209"/>
        <end position="215"/>
    </location>
</feature>
<feature type="helix" evidence="8">
    <location>
        <begin position="217"/>
        <end position="225"/>
    </location>
</feature>
<feature type="helix" evidence="8">
    <location>
        <begin position="233"/>
        <end position="235"/>
    </location>
</feature>
<feature type="helix" evidence="8">
    <location>
        <begin position="237"/>
        <end position="244"/>
    </location>
</feature>
<feature type="helix" evidence="8">
    <location>
        <begin position="249"/>
        <end position="273"/>
    </location>
</feature>
<dbReference type="EMBL" id="X53676">
    <property type="protein sequence ID" value="CAA37717.1"/>
    <property type="molecule type" value="Genomic_DNA"/>
</dbReference>
<dbReference type="PIR" id="S13585">
    <property type="entry name" value="S13585"/>
</dbReference>
<dbReference type="RefSeq" id="WP_003279964.1">
    <property type="nucleotide sequence ID" value="NZ_CP036186.1"/>
</dbReference>
<dbReference type="PDB" id="7O0Y">
    <property type="method" value="EM"/>
    <property type="resolution" value="3.30 A"/>
    <property type="chains" value="D/E=1-276"/>
</dbReference>
<dbReference type="PDB" id="7O0Z">
    <property type="method" value="EM"/>
    <property type="resolution" value="3.70 A"/>
    <property type="chains" value="D/E=1-276"/>
</dbReference>
<dbReference type="PDB" id="7O10">
    <property type="method" value="EM"/>
    <property type="resolution" value="3.60 A"/>
    <property type="chains" value="D/E=1-276"/>
</dbReference>
<dbReference type="PDB" id="7O11">
    <property type="method" value="EM"/>
    <property type="resolution" value="3.70 A"/>
    <property type="chains" value="D/E=1-276"/>
</dbReference>
<dbReference type="PDB" id="7O12">
    <property type="method" value="EM"/>
    <property type="resolution" value="3.70 A"/>
    <property type="chains" value="D/E=1-276"/>
</dbReference>
<dbReference type="PDB" id="7O13">
    <property type="method" value="EM"/>
    <property type="resolution" value="3.60 A"/>
    <property type="chains" value="D/E=1-276"/>
</dbReference>
<dbReference type="PDB" id="7O14">
    <property type="method" value="EM"/>
    <property type="chains" value="D/E=1-276"/>
</dbReference>
<dbReference type="PDB" id="7O15">
    <property type="method" value="EM"/>
    <property type="chains" value="D/E=1-276"/>
</dbReference>
<dbReference type="PDB" id="7O16">
    <property type="method" value="EM"/>
    <property type="chains" value="D/E=1-276"/>
</dbReference>
<dbReference type="PDB" id="7O17">
    <property type="method" value="EM"/>
    <property type="resolution" value="4.50 A"/>
    <property type="chains" value="D/E=1-276"/>
</dbReference>
<dbReference type="PDB" id="7OSF">
    <property type="method" value="EM"/>
    <property type="resolution" value="3.80 A"/>
    <property type="chains" value="D/E=1-276"/>
</dbReference>
<dbReference type="PDB" id="7OSG">
    <property type="method" value="EM"/>
    <property type="resolution" value="3.30 A"/>
    <property type="chains" value="D/E=1-276"/>
</dbReference>
<dbReference type="PDB" id="7OSH">
    <property type="method" value="EM"/>
    <property type="resolution" value="3.80 A"/>
    <property type="chains" value="D/E=1-276"/>
</dbReference>
<dbReference type="PDB" id="7OSI">
    <property type="method" value="EM"/>
    <property type="resolution" value="3.80 A"/>
    <property type="chains" value="D/E=1-276"/>
</dbReference>
<dbReference type="PDB" id="7OSJ">
    <property type="method" value="EM"/>
    <property type="resolution" value="3.80 A"/>
    <property type="chains" value="D/E=1-276"/>
</dbReference>
<dbReference type="PDB" id="7QBA">
    <property type="method" value="EM"/>
    <property type="resolution" value="3.78 A"/>
    <property type="chains" value="D/E=1-276"/>
</dbReference>
<dbReference type="PDB" id="7ZNQ">
    <property type="method" value="EM"/>
    <property type="resolution" value="3.04 A"/>
    <property type="chains" value="Y/y=1-276"/>
</dbReference>
<dbReference type="PDBsum" id="7O0Y"/>
<dbReference type="PDBsum" id="7O0Z"/>
<dbReference type="PDBsum" id="7O10"/>
<dbReference type="PDBsum" id="7O11"/>
<dbReference type="PDBsum" id="7O12"/>
<dbReference type="PDBsum" id="7O13"/>
<dbReference type="PDBsum" id="7O14"/>
<dbReference type="PDBsum" id="7O15"/>
<dbReference type="PDBsum" id="7O16"/>
<dbReference type="PDBsum" id="7O17"/>
<dbReference type="PDBsum" id="7OSF"/>
<dbReference type="PDBsum" id="7OSG"/>
<dbReference type="PDBsum" id="7OSH"/>
<dbReference type="PDBsum" id="7OSI"/>
<dbReference type="PDBsum" id="7OSJ"/>
<dbReference type="PDBsum" id="7QBA"/>
<dbReference type="PDBsum" id="7ZNQ"/>
<dbReference type="EMDB" id="EMD-12683"/>
<dbReference type="EMDB" id="EMD-12684"/>
<dbReference type="EMDB" id="EMD-12685"/>
<dbReference type="EMDB" id="EMD-12686"/>
<dbReference type="EMDB" id="EMD-12687"/>
<dbReference type="EMDB" id="EMD-12688"/>
<dbReference type="EMDB" id="EMD-12689"/>
<dbReference type="EMDB" id="EMD-12690"/>
<dbReference type="EMDB" id="EMD-12691"/>
<dbReference type="EMDB" id="EMD-12692"/>
<dbReference type="EMDB" id="EMD-13049"/>
<dbReference type="EMDB" id="EMD-13050"/>
<dbReference type="EMDB" id="EMD-13051"/>
<dbReference type="EMDB" id="EMD-13052"/>
<dbReference type="EMDB" id="EMD-13053"/>
<dbReference type="EMDB" id="EMD-13885"/>
<dbReference type="EMDB" id="EMD-14813"/>
<dbReference type="SMR" id="P19845"/>
<dbReference type="eggNOG" id="COG1277">
    <property type="taxonomic scope" value="Bacteria"/>
</dbReference>
<dbReference type="GO" id="GO:0005886">
    <property type="term" value="C:plasma membrane"/>
    <property type="evidence" value="ECO:0007669"/>
    <property type="project" value="UniProtKB-SubCell"/>
</dbReference>
<dbReference type="GO" id="GO:0140359">
    <property type="term" value="F:ABC-type transporter activity"/>
    <property type="evidence" value="ECO:0007669"/>
    <property type="project" value="InterPro"/>
</dbReference>
<dbReference type="InterPro" id="IPR032688">
    <property type="entry name" value="ABC2_NosY/YtrC-like"/>
</dbReference>
<dbReference type="PANTHER" id="PTHR43471">
    <property type="entry name" value="ABC TRANSPORTER PERMEASE"/>
    <property type="match status" value="1"/>
</dbReference>
<dbReference type="PANTHER" id="PTHR43471:SF1">
    <property type="entry name" value="ABC TRANSPORTER PERMEASE PROTEIN NOSY-RELATED"/>
    <property type="match status" value="1"/>
</dbReference>
<dbReference type="Pfam" id="PF12679">
    <property type="entry name" value="ABC2_membrane_2"/>
    <property type="match status" value="1"/>
</dbReference>
<keyword id="KW-0002">3D-structure</keyword>
<keyword id="KW-0997">Cell inner membrane</keyword>
<keyword id="KW-1003">Cell membrane</keyword>
<keyword id="KW-0472">Membrane</keyword>
<keyword id="KW-0812">Transmembrane</keyword>
<keyword id="KW-1133">Transmembrane helix</keyword>
<keyword id="KW-0813">Transport</keyword>
<proteinExistence type="evidence at protein level"/>
<accession>P19845</accession>
<gene>
    <name evidence="4" type="primary">nosY</name>
</gene>
<reference key="1">
    <citation type="journal article" date="1990" name="Eur. J. Biochem.">
        <title>Nitrous oxide reductase from denitrifying Pseudomonas stutzeri. Genes for copper-processing and properties of the deduced products, including a new member of the family of ATP/GTP-binding proteins.</title>
        <authorList>
            <person name="Zumft W.G."/>
            <person name="Viebrock-Sambale A."/>
            <person name="Braun C."/>
        </authorList>
    </citation>
    <scope>NUCLEOTIDE SEQUENCE [GENOMIC DNA]</scope>
    <scope>FUNCTION</scope>
    <scope>SUBCELLULAR LOCATION</scope>
    <source>
        <strain>ATCC 14405 / JCM 20778 / CIP 107696 / IAM 12931 / LMG 2243 / NCIMB 568 / Baumann 218 / ZoBell 632</strain>
    </source>
</reference>
<reference key="2">
    <citation type="journal article" date="2003" name="J. Bacteriol.">
        <title>Operon structure and regulation of the nos gene region of Pseudomonas stutzeri, encoding an ABC-Type ATPase for maturation of nitrous oxide reductase.</title>
        <authorList>
            <person name="Honisch U."/>
            <person name="Zumft W.G."/>
        </authorList>
    </citation>
    <scope>FUNCTION</scope>
    <scope>SUBUNIT</scope>
    <scope>INDUCTION</scope>
    <source>
        <strain>ATCC 14405 / JCM 20778 / CIP 107696 / IAM 12931 / LMG 2243 / NCIMB 568 / Baumann 218 / ZoBell 632</strain>
    </source>
</reference>
<name>NOSY_STUST</name>
<evidence type="ECO:0000255" key="1"/>
<evidence type="ECO:0000269" key="2">
    <source>
    </source>
</evidence>
<evidence type="ECO:0000269" key="3">
    <source>
    </source>
</evidence>
<evidence type="ECO:0000303" key="4">
    <source>
    </source>
</evidence>
<evidence type="ECO:0000305" key="5"/>
<evidence type="ECO:0000305" key="6">
    <source>
    </source>
</evidence>
<evidence type="ECO:0000305" key="7">
    <source>
    </source>
</evidence>
<evidence type="ECO:0007829" key="8">
    <source>
        <dbReference type="PDB" id="7ZNQ"/>
    </source>
</evidence>
<sequence>MNQVWNIARKELSDGLRNRWLLAISLLFAVLAVGIAWLGAAASGQLGFTSIPATIASLASLATFLMPLIALLLAYDAIVGEDEGGTLMLLLTYPLGRGQILLGKFVGHGLILALAVLIGFGCAALAIALLVEGVELGMLFWAFGRFMISSTLLGWVFLAFAYVLSGKVNEKSSAAGLALGVWFLFVLVFDLVLLALLVLSEGKFNPELLPWLLLLNPTDIYRLINLSGFEGSGSAMGVLSLGADLPVPAAVLWLCLLAWIGVSLLLAYAIFRRRLT</sequence>